<protein>
    <recommendedName>
        <fullName>Meiotic expression up-regulated protein 15</fullName>
    </recommendedName>
</protein>
<proteinExistence type="evidence at transcript level"/>
<dbReference type="EMBL" id="AB054299">
    <property type="protein sequence ID" value="BAB60869.1"/>
    <property type="molecule type" value="mRNA"/>
</dbReference>
<dbReference type="EMBL" id="CU329672">
    <property type="protein sequence ID" value="CAD35754.1"/>
    <property type="molecule type" value="Genomic_DNA"/>
</dbReference>
<dbReference type="RefSeq" id="NP_001018850.1">
    <property type="nucleotide sequence ID" value="NM_001022922.2"/>
</dbReference>
<dbReference type="SMR" id="Q96WS6"/>
<dbReference type="BioGRID" id="275363">
    <property type="interactions" value="1"/>
</dbReference>
<dbReference type="PaxDb" id="4896-SPCPJ732.03.1"/>
<dbReference type="EnsemblFungi" id="SPCPJ732.03.1">
    <property type="protein sequence ID" value="SPCPJ732.03.1:pep"/>
    <property type="gene ID" value="SPCPJ732.03"/>
</dbReference>
<dbReference type="PomBase" id="SPCPJ732.03">
    <property type="gene designation" value="meu15"/>
</dbReference>
<dbReference type="VEuPathDB" id="FungiDB:SPCPJ732.03"/>
<dbReference type="HOGENOM" id="CLU_1741643_0_0_1"/>
<dbReference type="InParanoid" id="Q96WS6"/>
<dbReference type="PRO" id="PR:Q96WS6"/>
<dbReference type="Proteomes" id="UP000002485">
    <property type="component" value="Chromosome III"/>
</dbReference>
<dbReference type="GO" id="GO:0005737">
    <property type="term" value="C:cytoplasm"/>
    <property type="evidence" value="ECO:0007005"/>
    <property type="project" value="PomBase"/>
</dbReference>
<dbReference type="GO" id="GO:0005794">
    <property type="term" value="C:Golgi apparatus"/>
    <property type="evidence" value="ECO:0007005"/>
    <property type="project" value="PomBase"/>
</dbReference>
<dbReference type="GO" id="GO:0051321">
    <property type="term" value="P:meiotic cell cycle"/>
    <property type="evidence" value="ECO:0007669"/>
    <property type="project" value="UniProtKB-KW"/>
</dbReference>
<keyword id="KW-0469">Meiosis</keyword>
<keyword id="KW-1185">Reference proteome</keyword>
<accession>Q96WS6</accession>
<name>MEU15_SCHPO</name>
<sequence length="150" mass="17814">MEETLPSYEAASGAANLQEVKPQVLPLEEIKKIYKISYWWLCSIALIQTWWVLLGLLPIFFALEHYEVPYKWIFIIEMLYYELYLTLYVCWCYKLRSDFWNEAAKNRPNEERLSALGGWDFLRIPKKRVLVLRDAQSEKKQNNADASNLV</sequence>
<feature type="chain" id="PRO_0000096449" description="Meiotic expression up-regulated protein 15">
    <location>
        <begin position="1"/>
        <end position="150"/>
    </location>
</feature>
<organism>
    <name type="scientific">Schizosaccharomyces pombe (strain 972 / ATCC 24843)</name>
    <name type="common">Fission yeast</name>
    <dbReference type="NCBI Taxonomy" id="284812"/>
    <lineage>
        <taxon>Eukaryota</taxon>
        <taxon>Fungi</taxon>
        <taxon>Dikarya</taxon>
        <taxon>Ascomycota</taxon>
        <taxon>Taphrinomycotina</taxon>
        <taxon>Schizosaccharomycetes</taxon>
        <taxon>Schizosaccharomycetales</taxon>
        <taxon>Schizosaccharomycetaceae</taxon>
        <taxon>Schizosaccharomyces</taxon>
    </lineage>
</organism>
<gene>
    <name type="primary">meu15</name>
    <name type="ORF">SPCPJ732.03</name>
</gene>
<reference key="1">
    <citation type="journal article" date="2001" name="Nucleic Acids Res.">
        <title>Comprehensive isolation of meiosis-specific genes identifies novel proteins and unusual non-coding transcripts in Schizosaccharomyces pombe.</title>
        <authorList>
            <person name="Watanabe T."/>
            <person name="Miyashita K."/>
            <person name="Saito T.T."/>
            <person name="Yoneki T."/>
            <person name="Kakihara Y."/>
            <person name="Nabeshima K."/>
            <person name="Kishi Y.A."/>
            <person name="Shimoda C."/>
            <person name="Nojima H."/>
        </authorList>
    </citation>
    <scope>NUCLEOTIDE SEQUENCE [MRNA]</scope>
    <source>
        <strain>CD16-1</strain>
    </source>
</reference>
<reference key="2">
    <citation type="journal article" date="2002" name="Nature">
        <title>The genome sequence of Schizosaccharomyces pombe.</title>
        <authorList>
            <person name="Wood V."/>
            <person name="Gwilliam R."/>
            <person name="Rajandream M.A."/>
            <person name="Lyne M.H."/>
            <person name="Lyne R."/>
            <person name="Stewart A."/>
            <person name="Sgouros J.G."/>
            <person name="Peat N."/>
            <person name="Hayles J."/>
            <person name="Baker S.G."/>
            <person name="Basham D."/>
            <person name="Bowman S."/>
            <person name="Brooks K."/>
            <person name="Brown D."/>
            <person name="Brown S."/>
            <person name="Chillingworth T."/>
            <person name="Churcher C.M."/>
            <person name="Collins M."/>
            <person name="Connor R."/>
            <person name="Cronin A."/>
            <person name="Davis P."/>
            <person name="Feltwell T."/>
            <person name="Fraser A."/>
            <person name="Gentles S."/>
            <person name="Goble A."/>
            <person name="Hamlin N."/>
            <person name="Harris D.E."/>
            <person name="Hidalgo J."/>
            <person name="Hodgson G."/>
            <person name="Holroyd S."/>
            <person name="Hornsby T."/>
            <person name="Howarth S."/>
            <person name="Huckle E.J."/>
            <person name="Hunt S."/>
            <person name="Jagels K."/>
            <person name="James K.D."/>
            <person name="Jones L."/>
            <person name="Jones M."/>
            <person name="Leather S."/>
            <person name="McDonald S."/>
            <person name="McLean J."/>
            <person name="Mooney P."/>
            <person name="Moule S."/>
            <person name="Mungall K.L."/>
            <person name="Murphy L.D."/>
            <person name="Niblett D."/>
            <person name="Odell C."/>
            <person name="Oliver K."/>
            <person name="O'Neil S."/>
            <person name="Pearson D."/>
            <person name="Quail M.A."/>
            <person name="Rabbinowitsch E."/>
            <person name="Rutherford K.M."/>
            <person name="Rutter S."/>
            <person name="Saunders D."/>
            <person name="Seeger K."/>
            <person name="Sharp S."/>
            <person name="Skelton J."/>
            <person name="Simmonds M.N."/>
            <person name="Squares R."/>
            <person name="Squares S."/>
            <person name="Stevens K."/>
            <person name="Taylor K."/>
            <person name="Taylor R.G."/>
            <person name="Tivey A."/>
            <person name="Walsh S.V."/>
            <person name="Warren T."/>
            <person name="Whitehead S."/>
            <person name="Woodward J.R."/>
            <person name="Volckaert G."/>
            <person name="Aert R."/>
            <person name="Robben J."/>
            <person name="Grymonprez B."/>
            <person name="Weltjens I."/>
            <person name="Vanstreels E."/>
            <person name="Rieger M."/>
            <person name="Schaefer M."/>
            <person name="Mueller-Auer S."/>
            <person name="Gabel C."/>
            <person name="Fuchs M."/>
            <person name="Duesterhoeft A."/>
            <person name="Fritzc C."/>
            <person name="Holzer E."/>
            <person name="Moestl D."/>
            <person name="Hilbert H."/>
            <person name="Borzym K."/>
            <person name="Langer I."/>
            <person name="Beck A."/>
            <person name="Lehrach H."/>
            <person name="Reinhardt R."/>
            <person name="Pohl T.M."/>
            <person name="Eger P."/>
            <person name="Zimmermann W."/>
            <person name="Wedler H."/>
            <person name="Wambutt R."/>
            <person name="Purnelle B."/>
            <person name="Goffeau A."/>
            <person name="Cadieu E."/>
            <person name="Dreano S."/>
            <person name="Gloux S."/>
            <person name="Lelaure V."/>
            <person name="Mottier S."/>
            <person name="Galibert F."/>
            <person name="Aves S.J."/>
            <person name="Xiang Z."/>
            <person name="Hunt C."/>
            <person name="Moore K."/>
            <person name="Hurst S.M."/>
            <person name="Lucas M."/>
            <person name="Rochet M."/>
            <person name="Gaillardin C."/>
            <person name="Tallada V.A."/>
            <person name="Garzon A."/>
            <person name="Thode G."/>
            <person name="Daga R.R."/>
            <person name="Cruzado L."/>
            <person name="Jimenez J."/>
            <person name="Sanchez M."/>
            <person name="del Rey F."/>
            <person name="Benito J."/>
            <person name="Dominguez A."/>
            <person name="Revuelta J.L."/>
            <person name="Moreno S."/>
            <person name="Armstrong J."/>
            <person name="Forsburg S.L."/>
            <person name="Cerutti L."/>
            <person name="Lowe T."/>
            <person name="McCombie W.R."/>
            <person name="Paulsen I."/>
            <person name="Potashkin J."/>
            <person name="Shpakovski G.V."/>
            <person name="Ussery D."/>
            <person name="Barrell B.G."/>
            <person name="Nurse P."/>
        </authorList>
    </citation>
    <scope>NUCLEOTIDE SEQUENCE [LARGE SCALE GENOMIC DNA]</scope>
    <source>
        <strain>972 / ATCC 24843</strain>
    </source>
</reference>